<organism>
    <name type="scientific">Streptococcus agalactiae serotype III (strain NEM316)</name>
    <dbReference type="NCBI Taxonomy" id="211110"/>
    <lineage>
        <taxon>Bacteria</taxon>
        <taxon>Bacillati</taxon>
        <taxon>Bacillota</taxon>
        <taxon>Bacilli</taxon>
        <taxon>Lactobacillales</taxon>
        <taxon>Streptococcaceae</taxon>
        <taxon>Streptococcus</taxon>
    </lineage>
</organism>
<feature type="chain" id="PRO_1000010088" description="DNA mismatch repair protein MutL">
    <location>
        <begin position="1"/>
        <end position="657"/>
    </location>
</feature>
<reference key="1">
    <citation type="journal article" date="2002" name="Mol. Microbiol.">
        <title>Genome sequence of Streptococcus agalactiae, a pathogen causing invasive neonatal disease.</title>
        <authorList>
            <person name="Glaser P."/>
            <person name="Rusniok C."/>
            <person name="Buchrieser C."/>
            <person name="Chevalier F."/>
            <person name="Frangeul L."/>
            <person name="Msadek T."/>
            <person name="Zouine M."/>
            <person name="Couve E."/>
            <person name="Lalioui L."/>
            <person name="Poyart C."/>
            <person name="Trieu-Cuot P."/>
            <person name="Kunst F."/>
        </authorList>
    </citation>
    <scope>NUCLEOTIDE SEQUENCE [LARGE SCALE GENOMIC DNA]</scope>
    <source>
        <strain>NEM316</strain>
    </source>
</reference>
<accession>Q8E2R5</accession>
<keyword id="KW-0227">DNA damage</keyword>
<keyword id="KW-0234">DNA repair</keyword>
<protein>
    <recommendedName>
        <fullName evidence="1">DNA mismatch repair protein MutL</fullName>
    </recommendedName>
</protein>
<comment type="function">
    <text evidence="1">This protein is involved in the repair of mismatches in DNA. It is required for dam-dependent methyl-directed DNA mismatch repair. May act as a 'molecular matchmaker', a protein that promotes the formation of a stable complex between two or more DNA-binding proteins in an ATP-dependent manner without itself being part of a final effector complex.</text>
</comment>
<comment type="similarity">
    <text evidence="1">Belongs to the DNA mismatch repair MutL/HexB family.</text>
</comment>
<name>MUTL_STRA3</name>
<sequence>MSKIIELPDILANQIAAGEVVERPSSVVKELVENAIDAGSSQITIEVEESGLKKIQITDNGEGMTSEDAVLSLRRHATSKIKSQSDLFRIRTLGFRGEALPSIASISLMTIKTATEQGKQGTLLVAKGGNIEKQEVVSSPRGTKILVENLFFNTPARLKYMKSLQSELAHIIDIVNRLSLAHPEVAFTLINDGKEMTKTSGTGDLRQAIAGIYGLNTAKKMIEISNADLDFEISGYVSLPELTRANRNYITLLINGRYIKNFLLNRSILDGYGSKLMVGRFPIAVIDIQIDPYLADVNVHPTKQEVRISKERELMSLISTAISESLKQYDLIPDALENLAKTSTRSVDKPIQTSFSLKQPGLYYDRAKNDFFIGADTVSEPIANFTNLDKSDGSVDNDVKNSVNQGATQSPNIKYASRDQADSENFIHSQDYLSSKQSLNKLVEKLDSEESSTFPELEFFGQMHGTYLFAQGNGGLYIIDQHAAQERVKYEYYREKIGEVDNSLQQLLVPFLFEFSSSDFLQLQEKMSLLQDVGIFLEPYGNNTFILREHPIWMKEEEVESGIYEMCDMLLLTNEVSVKKYRAELAIMMSCKRSIKANHTLDDYSARHLLDQLAQCKNPYNCPHGRPVLVNFTKADMEKMFKRIQENHTSLRDLGKY</sequence>
<proteinExistence type="inferred from homology"/>
<dbReference type="EMBL" id="AL766856">
    <property type="protein sequence ID" value="CAD47711.1"/>
    <property type="molecule type" value="Genomic_DNA"/>
</dbReference>
<dbReference type="RefSeq" id="WP_000034617.1">
    <property type="nucleotide sequence ID" value="NC_004368.1"/>
</dbReference>
<dbReference type="SMR" id="Q8E2R5"/>
<dbReference type="KEGG" id="san:mutL"/>
<dbReference type="eggNOG" id="COG0323">
    <property type="taxonomic scope" value="Bacteria"/>
</dbReference>
<dbReference type="HOGENOM" id="CLU_004131_4_1_9"/>
<dbReference type="Proteomes" id="UP000000823">
    <property type="component" value="Chromosome"/>
</dbReference>
<dbReference type="GO" id="GO:0032300">
    <property type="term" value="C:mismatch repair complex"/>
    <property type="evidence" value="ECO:0007669"/>
    <property type="project" value="InterPro"/>
</dbReference>
<dbReference type="GO" id="GO:0005524">
    <property type="term" value="F:ATP binding"/>
    <property type="evidence" value="ECO:0007669"/>
    <property type="project" value="InterPro"/>
</dbReference>
<dbReference type="GO" id="GO:0016887">
    <property type="term" value="F:ATP hydrolysis activity"/>
    <property type="evidence" value="ECO:0007669"/>
    <property type="project" value="InterPro"/>
</dbReference>
<dbReference type="GO" id="GO:0140664">
    <property type="term" value="F:ATP-dependent DNA damage sensor activity"/>
    <property type="evidence" value="ECO:0007669"/>
    <property type="project" value="InterPro"/>
</dbReference>
<dbReference type="GO" id="GO:0030983">
    <property type="term" value="F:mismatched DNA binding"/>
    <property type="evidence" value="ECO:0007669"/>
    <property type="project" value="InterPro"/>
</dbReference>
<dbReference type="GO" id="GO:0006298">
    <property type="term" value="P:mismatch repair"/>
    <property type="evidence" value="ECO:0007669"/>
    <property type="project" value="UniProtKB-UniRule"/>
</dbReference>
<dbReference type="CDD" id="cd16926">
    <property type="entry name" value="HATPase_MutL-MLH-PMS-like"/>
    <property type="match status" value="1"/>
</dbReference>
<dbReference type="CDD" id="cd00782">
    <property type="entry name" value="MutL_Trans"/>
    <property type="match status" value="1"/>
</dbReference>
<dbReference type="FunFam" id="3.30.1370.100:FF:000004">
    <property type="entry name" value="DNA mismatch repair endonuclease MutL"/>
    <property type="match status" value="1"/>
</dbReference>
<dbReference type="FunFam" id="3.30.565.10:FF:000003">
    <property type="entry name" value="DNA mismatch repair endonuclease MutL"/>
    <property type="match status" value="1"/>
</dbReference>
<dbReference type="Gene3D" id="3.30.230.10">
    <property type="match status" value="1"/>
</dbReference>
<dbReference type="Gene3D" id="3.30.565.10">
    <property type="entry name" value="Histidine kinase-like ATPase, C-terminal domain"/>
    <property type="match status" value="1"/>
</dbReference>
<dbReference type="Gene3D" id="3.30.1540.20">
    <property type="entry name" value="MutL, C-terminal domain, dimerisation subdomain"/>
    <property type="match status" value="1"/>
</dbReference>
<dbReference type="Gene3D" id="3.30.1370.100">
    <property type="entry name" value="MutL, C-terminal domain, regulatory subdomain"/>
    <property type="match status" value="1"/>
</dbReference>
<dbReference type="HAMAP" id="MF_00149">
    <property type="entry name" value="DNA_mis_repair"/>
    <property type="match status" value="1"/>
</dbReference>
<dbReference type="InterPro" id="IPR014762">
    <property type="entry name" value="DNA_mismatch_repair_CS"/>
</dbReference>
<dbReference type="InterPro" id="IPR020667">
    <property type="entry name" value="DNA_mismatch_repair_MutL"/>
</dbReference>
<dbReference type="InterPro" id="IPR013507">
    <property type="entry name" value="DNA_mismatch_S5_2-like"/>
</dbReference>
<dbReference type="InterPro" id="IPR036890">
    <property type="entry name" value="HATPase_C_sf"/>
</dbReference>
<dbReference type="InterPro" id="IPR002099">
    <property type="entry name" value="MutL/Mlh/PMS"/>
</dbReference>
<dbReference type="InterPro" id="IPR038973">
    <property type="entry name" value="MutL/Mlh/Pms-like"/>
</dbReference>
<dbReference type="InterPro" id="IPR014790">
    <property type="entry name" value="MutL_C"/>
</dbReference>
<dbReference type="InterPro" id="IPR042120">
    <property type="entry name" value="MutL_C_dimsub"/>
</dbReference>
<dbReference type="InterPro" id="IPR042121">
    <property type="entry name" value="MutL_C_regsub"/>
</dbReference>
<dbReference type="InterPro" id="IPR037198">
    <property type="entry name" value="MutL_C_sf"/>
</dbReference>
<dbReference type="InterPro" id="IPR020568">
    <property type="entry name" value="Ribosomal_Su5_D2-typ_SF"/>
</dbReference>
<dbReference type="InterPro" id="IPR014721">
    <property type="entry name" value="Ribsml_uS5_D2-typ_fold_subgr"/>
</dbReference>
<dbReference type="NCBIfam" id="TIGR00585">
    <property type="entry name" value="mutl"/>
    <property type="match status" value="1"/>
</dbReference>
<dbReference type="NCBIfam" id="NF000950">
    <property type="entry name" value="PRK00095.1-3"/>
    <property type="match status" value="1"/>
</dbReference>
<dbReference type="PANTHER" id="PTHR10073">
    <property type="entry name" value="DNA MISMATCH REPAIR PROTEIN MLH, PMS, MUTL"/>
    <property type="match status" value="1"/>
</dbReference>
<dbReference type="PANTHER" id="PTHR10073:SF12">
    <property type="entry name" value="DNA MISMATCH REPAIR PROTEIN MLH1"/>
    <property type="match status" value="1"/>
</dbReference>
<dbReference type="Pfam" id="PF01119">
    <property type="entry name" value="DNA_mis_repair"/>
    <property type="match status" value="1"/>
</dbReference>
<dbReference type="Pfam" id="PF13589">
    <property type="entry name" value="HATPase_c_3"/>
    <property type="match status" value="1"/>
</dbReference>
<dbReference type="Pfam" id="PF08676">
    <property type="entry name" value="MutL_C"/>
    <property type="match status" value="1"/>
</dbReference>
<dbReference type="SMART" id="SM01340">
    <property type="entry name" value="DNA_mis_repair"/>
    <property type="match status" value="1"/>
</dbReference>
<dbReference type="SMART" id="SM00853">
    <property type="entry name" value="MutL_C"/>
    <property type="match status" value="1"/>
</dbReference>
<dbReference type="SUPFAM" id="SSF55874">
    <property type="entry name" value="ATPase domain of HSP90 chaperone/DNA topoisomerase II/histidine kinase"/>
    <property type="match status" value="1"/>
</dbReference>
<dbReference type="SUPFAM" id="SSF118116">
    <property type="entry name" value="DNA mismatch repair protein MutL"/>
    <property type="match status" value="1"/>
</dbReference>
<dbReference type="SUPFAM" id="SSF54211">
    <property type="entry name" value="Ribosomal protein S5 domain 2-like"/>
    <property type="match status" value="1"/>
</dbReference>
<dbReference type="PROSITE" id="PS00058">
    <property type="entry name" value="DNA_MISMATCH_REPAIR_1"/>
    <property type="match status" value="1"/>
</dbReference>
<gene>
    <name evidence="1" type="primary">mutL</name>
    <name type="ordered locus">gbs2052</name>
</gene>
<evidence type="ECO:0000255" key="1">
    <source>
        <dbReference type="HAMAP-Rule" id="MF_00149"/>
    </source>
</evidence>